<protein>
    <recommendedName>
        <fullName evidence="9">Dynein axonemal intermediate chain 4</fullName>
    </recommendedName>
    <alternativeName>
        <fullName>WD repeat-containing protein 78</fullName>
    </alternativeName>
</protein>
<reference key="1">
    <citation type="journal article" date="2004" name="Nat. Genet.">
        <title>Complete sequencing and characterization of 21,243 full-length human cDNAs.</title>
        <authorList>
            <person name="Ota T."/>
            <person name="Suzuki Y."/>
            <person name="Nishikawa T."/>
            <person name="Otsuki T."/>
            <person name="Sugiyama T."/>
            <person name="Irie R."/>
            <person name="Wakamatsu A."/>
            <person name="Hayashi K."/>
            <person name="Sato H."/>
            <person name="Nagai K."/>
            <person name="Kimura K."/>
            <person name="Makita H."/>
            <person name="Sekine M."/>
            <person name="Obayashi M."/>
            <person name="Nishi T."/>
            <person name="Shibahara T."/>
            <person name="Tanaka T."/>
            <person name="Ishii S."/>
            <person name="Yamamoto J."/>
            <person name="Saito K."/>
            <person name="Kawai Y."/>
            <person name="Isono Y."/>
            <person name="Nakamura Y."/>
            <person name="Nagahari K."/>
            <person name="Murakami K."/>
            <person name="Yasuda T."/>
            <person name="Iwayanagi T."/>
            <person name="Wagatsuma M."/>
            <person name="Shiratori A."/>
            <person name="Sudo H."/>
            <person name="Hosoiri T."/>
            <person name="Kaku Y."/>
            <person name="Kodaira H."/>
            <person name="Kondo H."/>
            <person name="Sugawara M."/>
            <person name="Takahashi M."/>
            <person name="Kanda K."/>
            <person name="Yokoi T."/>
            <person name="Furuya T."/>
            <person name="Kikkawa E."/>
            <person name="Omura Y."/>
            <person name="Abe K."/>
            <person name="Kamihara K."/>
            <person name="Katsuta N."/>
            <person name="Sato K."/>
            <person name="Tanikawa M."/>
            <person name="Yamazaki M."/>
            <person name="Ninomiya K."/>
            <person name="Ishibashi T."/>
            <person name="Yamashita H."/>
            <person name="Murakawa K."/>
            <person name="Fujimori K."/>
            <person name="Tanai H."/>
            <person name="Kimata M."/>
            <person name="Watanabe M."/>
            <person name="Hiraoka S."/>
            <person name="Chiba Y."/>
            <person name="Ishida S."/>
            <person name="Ono Y."/>
            <person name="Takiguchi S."/>
            <person name="Watanabe S."/>
            <person name="Yosida M."/>
            <person name="Hotuta T."/>
            <person name="Kusano J."/>
            <person name="Kanehori K."/>
            <person name="Takahashi-Fujii A."/>
            <person name="Hara H."/>
            <person name="Tanase T.-O."/>
            <person name="Nomura Y."/>
            <person name="Togiya S."/>
            <person name="Komai F."/>
            <person name="Hara R."/>
            <person name="Takeuchi K."/>
            <person name="Arita M."/>
            <person name="Imose N."/>
            <person name="Musashino K."/>
            <person name="Yuuki H."/>
            <person name="Oshima A."/>
            <person name="Sasaki N."/>
            <person name="Aotsuka S."/>
            <person name="Yoshikawa Y."/>
            <person name="Matsunawa H."/>
            <person name="Ichihara T."/>
            <person name="Shiohata N."/>
            <person name="Sano S."/>
            <person name="Moriya S."/>
            <person name="Momiyama H."/>
            <person name="Satoh N."/>
            <person name="Takami S."/>
            <person name="Terashima Y."/>
            <person name="Suzuki O."/>
            <person name="Nakagawa S."/>
            <person name="Senoh A."/>
            <person name="Mizoguchi H."/>
            <person name="Goto Y."/>
            <person name="Shimizu F."/>
            <person name="Wakebe H."/>
            <person name="Hishigaki H."/>
            <person name="Watanabe T."/>
            <person name="Sugiyama A."/>
            <person name="Takemoto M."/>
            <person name="Kawakami B."/>
            <person name="Yamazaki M."/>
            <person name="Watanabe K."/>
            <person name="Kumagai A."/>
            <person name="Itakura S."/>
            <person name="Fukuzumi Y."/>
            <person name="Fujimori Y."/>
            <person name="Komiyama M."/>
            <person name="Tashiro H."/>
            <person name="Tanigami A."/>
            <person name="Fujiwara T."/>
            <person name="Ono T."/>
            <person name="Yamada K."/>
            <person name="Fujii Y."/>
            <person name="Ozaki K."/>
            <person name="Hirao M."/>
            <person name="Ohmori Y."/>
            <person name="Kawabata A."/>
            <person name="Hikiji T."/>
            <person name="Kobatake N."/>
            <person name="Inagaki H."/>
            <person name="Ikema Y."/>
            <person name="Okamoto S."/>
            <person name="Okitani R."/>
            <person name="Kawakami T."/>
            <person name="Noguchi S."/>
            <person name="Itoh T."/>
            <person name="Shigeta K."/>
            <person name="Senba T."/>
            <person name="Matsumura K."/>
            <person name="Nakajima Y."/>
            <person name="Mizuno T."/>
            <person name="Morinaga M."/>
            <person name="Sasaki M."/>
            <person name="Togashi T."/>
            <person name="Oyama M."/>
            <person name="Hata H."/>
            <person name="Watanabe M."/>
            <person name="Komatsu T."/>
            <person name="Mizushima-Sugano J."/>
            <person name="Satoh T."/>
            <person name="Shirai Y."/>
            <person name="Takahashi Y."/>
            <person name="Nakagawa K."/>
            <person name="Okumura K."/>
            <person name="Nagase T."/>
            <person name="Nomura N."/>
            <person name="Kikuchi H."/>
            <person name="Masuho Y."/>
            <person name="Yamashita R."/>
            <person name="Nakai K."/>
            <person name="Yada T."/>
            <person name="Nakamura Y."/>
            <person name="Ohara O."/>
            <person name="Isogai T."/>
            <person name="Sugano S."/>
        </authorList>
    </citation>
    <scope>NUCLEOTIDE SEQUENCE [LARGE SCALE MRNA] (ISOFORMS 1 AND 3)</scope>
    <source>
        <tissue>Lung</tissue>
        <tissue>Trachea</tissue>
    </source>
</reference>
<reference key="2">
    <citation type="journal article" date="2006" name="Nature">
        <title>The DNA sequence and biological annotation of human chromosome 1.</title>
        <authorList>
            <person name="Gregory S.G."/>
            <person name="Barlow K.F."/>
            <person name="McLay K.E."/>
            <person name="Kaul R."/>
            <person name="Swarbreck D."/>
            <person name="Dunham A."/>
            <person name="Scott C.E."/>
            <person name="Howe K.L."/>
            <person name="Woodfine K."/>
            <person name="Spencer C.C.A."/>
            <person name="Jones M.C."/>
            <person name="Gillson C."/>
            <person name="Searle S."/>
            <person name="Zhou Y."/>
            <person name="Kokocinski F."/>
            <person name="McDonald L."/>
            <person name="Evans R."/>
            <person name="Phillips K."/>
            <person name="Atkinson A."/>
            <person name="Cooper R."/>
            <person name="Jones C."/>
            <person name="Hall R.E."/>
            <person name="Andrews T.D."/>
            <person name="Lloyd C."/>
            <person name="Ainscough R."/>
            <person name="Almeida J.P."/>
            <person name="Ambrose K.D."/>
            <person name="Anderson F."/>
            <person name="Andrew R.W."/>
            <person name="Ashwell R.I.S."/>
            <person name="Aubin K."/>
            <person name="Babbage A.K."/>
            <person name="Bagguley C.L."/>
            <person name="Bailey J."/>
            <person name="Beasley H."/>
            <person name="Bethel G."/>
            <person name="Bird C.P."/>
            <person name="Bray-Allen S."/>
            <person name="Brown J.Y."/>
            <person name="Brown A.J."/>
            <person name="Buckley D."/>
            <person name="Burton J."/>
            <person name="Bye J."/>
            <person name="Carder C."/>
            <person name="Chapman J.C."/>
            <person name="Clark S.Y."/>
            <person name="Clarke G."/>
            <person name="Clee C."/>
            <person name="Cobley V."/>
            <person name="Collier R.E."/>
            <person name="Corby N."/>
            <person name="Coville G.J."/>
            <person name="Davies J."/>
            <person name="Deadman R."/>
            <person name="Dunn M."/>
            <person name="Earthrowl M."/>
            <person name="Ellington A.G."/>
            <person name="Errington H."/>
            <person name="Frankish A."/>
            <person name="Frankland J."/>
            <person name="French L."/>
            <person name="Garner P."/>
            <person name="Garnett J."/>
            <person name="Gay L."/>
            <person name="Ghori M.R.J."/>
            <person name="Gibson R."/>
            <person name="Gilby L.M."/>
            <person name="Gillett W."/>
            <person name="Glithero R.J."/>
            <person name="Grafham D.V."/>
            <person name="Griffiths C."/>
            <person name="Griffiths-Jones S."/>
            <person name="Grocock R."/>
            <person name="Hammond S."/>
            <person name="Harrison E.S.I."/>
            <person name="Hart E."/>
            <person name="Haugen E."/>
            <person name="Heath P.D."/>
            <person name="Holmes S."/>
            <person name="Holt K."/>
            <person name="Howden P.J."/>
            <person name="Hunt A.R."/>
            <person name="Hunt S.E."/>
            <person name="Hunter G."/>
            <person name="Isherwood J."/>
            <person name="James R."/>
            <person name="Johnson C."/>
            <person name="Johnson D."/>
            <person name="Joy A."/>
            <person name="Kay M."/>
            <person name="Kershaw J.K."/>
            <person name="Kibukawa M."/>
            <person name="Kimberley A.M."/>
            <person name="King A."/>
            <person name="Knights A.J."/>
            <person name="Lad H."/>
            <person name="Laird G."/>
            <person name="Lawlor S."/>
            <person name="Leongamornlert D.A."/>
            <person name="Lloyd D.M."/>
            <person name="Loveland J."/>
            <person name="Lovell J."/>
            <person name="Lush M.J."/>
            <person name="Lyne R."/>
            <person name="Martin S."/>
            <person name="Mashreghi-Mohammadi M."/>
            <person name="Matthews L."/>
            <person name="Matthews N.S.W."/>
            <person name="McLaren S."/>
            <person name="Milne S."/>
            <person name="Mistry S."/>
            <person name="Moore M.J.F."/>
            <person name="Nickerson T."/>
            <person name="O'Dell C.N."/>
            <person name="Oliver K."/>
            <person name="Palmeiri A."/>
            <person name="Palmer S.A."/>
            <person name="Parker A."/>
            <person name="Patel D."/>
            <person name="Pearce A.V."/>
            <person name="Peck A.I."/>
            <person name="Pelan S."/>
            <person name="Phelps K."/>
            <person name="Phillimore B.J."/>
            <person name="Plumb R."/>
            <person name="Rajan J."/>
            <person name="Raymond C."/>
            <person name="Rouse G."/>
            <person name="Saenphimmachak C."/>
            <person name="Sehra H.K."/>
            <person name="Sheridan E."/>
            <person name="Shownkeen R."/>
            <person name="Sims S."/>
            <person name="Skuce C.D."/>
            <person name="Smith M."/>
            <person name="Steward C."/>
            <person name="Subramanian S."/>
            <person name="Sycamore N."/>
            <person name="Tracey A."/>
            <person name="Tromans A."/>
            <person name="Van Helmond Z."/>
            <person name="Wall M."/>
            <person name="Wallis J.M."/>
            <person name="White S."/>
            <person name="Whitehead S.L."/>
            <person name="Wilkinson J.E."/>
            <person name="Willey D.L."/>
            <person name="Williams H."/>
            <person name="Wilming L."/>
            <person name="Wray P.W."/>
            <person name="Wu Z."/>
            <person name="Coulson A."/>
            <person name="Vaudin M."/>
            <person name="Sulston J.E."/>
            <person name="Durbin R.M."/>
            <person name="Hubbard T."/>
            <person name="Wooster R."/>
            <person name="Dunham I."/>
            <person name="Carter N.P."/>
            <person name="McVean G."/>
            <person name="Ross M.T."/>
            <person name="Harrow J."/>
            <person name="Olson M.V."/>
            <person name="Beck S."/>
            <person name="Rogers J."/>
            <person name="Bentley D.R."/>
        </authorList>
    </citation>
    <scope>NUCLEOTIDE SEQUENCE [LARGE SCALE GENOMIC DNA]</scope>
</reference>
<reference key="3">
    <citation type="journal article" date="2004" name="Genome Res.">
        <title>The status, quality, and expansion of the NIH full-length cDNA project: the Mammalian Gene Collection (MGC).</title>
        <authorList>
            <consortium name="The MGC Project Team"/>
        </authorList>
    </citation>
    <scope>NUCLEOTIDE SEQUENCE [LARGE SCALE MRNA] OF 16-545 (ISOFORM 2)</scope>
    <scope>VARIANT ALA-16</scope>
    <source>
        <tissue>Lung</tissue>
    </source>
</reference>
<reference key="4">
    <citation type="journal article" date="2007" name="BMC Genomics">
        <title>The full-ORF clone resource of the German cDNA consortium.</title>
        <authorList>
            <person name="Bechtel S."/>
            <person name="Rosenfelder H."/>
            <person name="Duda A."/>
            <person name="Schmidt C.P."/>
            <person name="Ernst U."/>
            <person name="Wellenreuther R."/>
            <person name="Mehrle A."/>
            <person name="Schuster C."/>
            <person name="Bahr A."/>
            <person name="Bloecker H."/>
            <person name="Heubner D."/>
            <person name="Hoerlein A."/>
            <person name="Michel G."/>
            <person name="Wedler H."/>
            <person name="Koehrer K."/>
            <person name="Ottenwaelder B."/>
            <person name="Poustka A."/>
            <person name="Wiemann S."/>
            <person name="Schupp I."/>
        </authorList>
    </citation>
    <scope>NUCLEOTIDE SEQUENCE [LARGE SCALE MRNA] OF 517-848 (ISOFORM 1)</scope>
    <scope>VARIANT GLN-832</scope>
    <source>
        <tissue>Testis</tissue>
    </source>
</reference>
<keyword id="KW-0002">3D-structure</keyword>
<keyword id="KW-0025">Alternative splicing</keyword>
<keyword id="KW-0966">Cell projection</keyword>
<keyword id="KW-0969">Cilium</keyword>
<keyword id="KW-0963">Cytoplasm</keyword>
<keyword id="KW-0206">Cytoskeleton</keyword>
<keyword id="KW-0282">Flagellum</keyword>
<keyword id="KW-1267">Proteomics identification</keyword>
<keyword id="KW-1185">Reference proteome</keyword>
<keyword id="KW-0677">Repeat</keyword>
<keyword id="KW-0853">WD repeat</keyword>
<feature type="chain" id="PRO_0000262773" description="Dynein axonemal intermediate chain 4">
    <location>
        <begin position="1"/>
        <end position="848"/>
    </location>
</feature>
<feature type="repeat" description="WD 1" evidence="3">
    <location>
        <begin position="534"/>
        <end position="574"/>
    </location>
</feature>
<feature type="repeat" description="WD 2" evidence="3">
    <location>
        <begin position="583"/>
        <end position="631"/>
    </location>
</feature>
<feature type="repeat" description="WD 3" evidence="3">
    <location>
        <begin position="658"/>
        <end position="698"/>
    </location>
</feature>
<feature type="repeat" description="WD 4" evidence="3">
    <location>
        <begin position="702"/>
        <end position="742"/>
    </location>
</feature>
<feature type="repeat" description="WD 5" evidence="3">
    <location>
        <begin position="745"/>
        <end position="784"/>
    </location>
</feature>
<feature type="repeat" description="WD 6" evidence="3">
    <location>
        <begin position="790"/>
        <end position="829"/>
    </location>
</feature>
<feature type="region of interest" description="Disordered" evidence="4">
    <location>
        <begin position="345"/>
        <end position="370"/>
    </location>
</feature>
<feature type="region of interest" description="Disordered" evidence="4">
    <location>
        <begin position="431"/>
        <end position="464"/>
    </location>
</feature>
<feature type="compositionally biased region" description="Polar residues" evidence="4">
    <location>
        <begin position="359"/>
        <end position="370"/>
    </location>
</feature>
<feature type="compositionally biased region" description="Basic and acidic residues" evidence="4">
    <location>
        <begin position="442"/>
        <end position="456"/>
    </location>
</feature>
<feature type="splice variant" id="VSP_021812" description="In isoform 3." evidence="7">
    <location>
        <begin position="1"/>
        <end position="254"/>
    </location>
</feature>
<feature type="splice variant" id="VSP_021816" description="In isoform 2." evidence="8">
    <original>WPERIYQSPYGVTAVDFS</original>
    <variation>VTQTRIRSIFIWLLTKFS</variation>
    <location>
        <begin position="528"/>
        <end position="545"/>
    </location>
</feature>
<feature type="splice variant" id="VSP_021817" description="In isoform 2." evidence="8">
    <location>
        <begin position="546"/>
        <end position="848"/>
    </location>
</feature>
<feature type="splice variant" id="VSP_021815" description="In isoform 3." evidence="7">
    <location>
        <begin position="672"/>
        <end position="704"/>
    </location>
</feature>
<feature type="sequence variant" id="VAR_057635" description="In dbSNP:rs1886686." evidence="5">
    <original>G</original>
    <variation>A</variation>
    <location>
        <position position="16"/>
    </location>
</feature>
<feature type="sequence variant" id="VAR_057636" description="In dbSNP:rs3008858.">
    <original>C</original>
    <variation>W</variation>
    <location>
        <position position="33"/>
    </location>
</feature>
<feature type="sequence variant" id="VAR_057637" description="In dbSNP:rs482082." evidence="6">
    <original>R</original>
    <variation>Q</variation>
    <location>
        <position position="832"/>
    </location>
</feature>
<proteinExistence type="evidence at protein level"/>
<evidence type="ECO:0000250" key="1">
    <source>
        <dbReference type="UniProtKB" id="E9PYY5"/>
    </source>
</evidence>
<evidence type="ECO:0000250" key="2">
    <source>
        <dbReference type="UniProtKB" id="Q6GPB9"/>
    </source>
</evidence>
<evidence type="ECO:0000255" key="3"/>
<evidence type="ECO:0000256" key="4">
    <source>
        <dbReference type="SAM" id="MobiDB-lite"/>
    </source>
</evidence>
<evidence type="ECO:0000269" key="5">
    <source>
    </source>
</evidence>
<evidence type="ECO:0000269" key="6">
    <source>
    </source>
</evidence>
<evidence type="ECO:0000303" key="7">
    <source>
    </source>
</evidence>
<evidence type="ECO:0000303" key="8">
    <source>
    </source>
</evidence>
<evidence type="ECO:0000305" key="9"/>
<evidence type="ECO:0000312" key="10">
    <source>
        <dbReference type="HGNC" id="HGNC:26252"/>
    </source>
</evidence>
<sequence>MTPGKHSGASARAANGGAWGYRDFRGGQKKGWCTTPQLVATMPVSPAGSHKQQNFGLNNATQPKKSISFFATMKATSVKGYTGANQSRMAVSKTVLIPPELKTVEKPNPNIKTTQVFDINGTDVTPRPLYHPDPLTGTAKPSKLLTSQEGSLGSEFISSYSLYQNTINPSTLGQFTRSVLGSSTVSKSSVSASESIAEDLEEPSYKRERLTSFTDLQVIRAAPEKIVTKEDLEKNIEIILTETETLRFFDLPTVMVSVESEEAEKVTQRNKNYEVLCRNRLGNDLYVERMMQTFNGAPKNKDVQCDKIIMEDKGIMSTAWDLYDSYNAMELVSLSVKQSVVESSSKANVLPKDQDQRLPGSTTEKNSETSSLMDIENVILAKIHEDEEDHSDAILKSDKFHQDLFFMERVLMENIFQPKLAAYRQLPVLKEPEPEEPEDVLESAKHEEVEEESKKEEEEEIHAEESTIPANLERLWSFSCDLTKGLNVSSLAWNKTNPDLLAVGYGHFGFKEQKRGLACCWSIKNPMWPERIYQSPYGVTAVDFSIGAPNLLAVGYHNGTIAIYNVRSNSNVPVLDSSESPQKHLGPVWQLQWIEQDRGTTGDGKREILVSISADGRISKWVIRKGLDCYDLMRLKRTTAASNKKGGEKEKKDEALISRQAPGMCFAFHPKDTNIYLAGTEEGHIHKCSCSYNEQYLDTYRGHKGPVYKVTWNPFCHDVFLSCSADWGVIIWQQENVKPSLSFYPATSVVYDVAWSPKSSYIFAAANENRVEIWDLHISTLDPLIVNTANPGIKFTTILFAKQTDCLLVGDSDGQVSVYELRNMPTVLETGRGDIMDTLLGSKSNQSA</sequence>
<gene>
    <name evidence="10" type="primary">DNAI4</name>
    <name type="synonym">WDR78</name>
</gene>
<organism>
    <name type="scientific">Homo sapiens</name>
    <name type="common">Human</name>
    <dbReference type="NCBI Taxonomy" id="9606"/>
    <lineage>
        <taxon>Eukaryota</taxon>
        <taxon>Metazoa</taxon>
        <taxon>Chordata</taxon>
        <taxon>Craniata</taxon>
        <taxon>Vertebrata</taxon>
        <taxon>Euteleostomi</taxon>
        <taxon>Mammalia</taxon>
        <taxon>Eutheria</taxon>
        <taxon>Euarchontoglires</taxon>
        <taxon>Primates</taxon>
        <taxon>Haplorrhini</taxon>
        <taxon>Catarrhini</taxon>
        <taxon>Hominidae</taxon>
        <taxon>Homo</taxon>
    </lineage>
</organism>
<comment type="function">
    <text evidence="1">Plays a critical role in the assembly of axonemal dynein complex, thereby playing a role in ciliary motility.</text>
</comment>
<comment type="subunit">
    <text evidence="1">Part of the multisubunit axonemal dynein complex formed at least of two heavy chains and a number of intermediate and light chains. Associated with axonemal dynein subunits such as, DNAH2, DNAI3, and DYNLT1. Interacts with DYNLT1.</text>
</comment>
<comment type="subcellular location">
    <subcellularLocation>
        <location evidence="1">Cytoplasm</location>
        <location evidence="1">Cytoskeleton</location>
        <location evidence="1">Flagellum axoneme</location>
    </subcellularLocation>
    <subcellularLocation>
        <location evidence="1">Cytoplasm</location>
        <location evidence="1">Cytoskeleton</location>
        <location evidence="1">Cilium axoneme</location>
    </subcellularLocation>
    <subcellularLocation>
        <location evidence="2">Dynein axonemal particle</location>
    </subcellularLocation>
</comment>
<comment type="alternative products">
    <event type="alternative splicing"/>
    <isoform>
        <id>Q5VTH9-1</id>
        <name>1</name>
        <sequence type="displayed"/>
    </isoform>
    <isoform>
        <id>Q5VTH9-2</id>
        <name>2</name>
        <sequence type="described" ref="VSP_021816 VSP_021817"/>
    </isoform>
    <isoform>
        <id>Q5VTH9-3</id>
        <name>3</name>
        <sequence type="described" ref="VSP_021812 VSP_021815"/>
    </isoform>
</comment>
<comment type="sequence caution" evidence="9">
    <molecule>Isoform 3</molecule>
    <conflict type="frameshift">
        <sequence resource="EMBL-CDS" id="BAB15551"/>
    </conflict>
</comment>
<accession>Q5VTH9</accession>
<accession>A8K9W5</accession>
<accession>B5MDT3</accession>
<accession>H7BY80</accession>
<accession>Q5VTI0</accession>
<accession>Q8N5G5</accession>
<accession>Q9H5R9</accession>
<accession>Q9UF44</accession>
<dbReference type="EMBL" id="AK026782">
    <property type="protein sequence ID" value="BAB15551.1"/>
    <property type="status" value="ALT_FRAME"/>
    <property type="molecule type" value="mRNA"/>
</dbReference>
<dbReference type="EMBL" id="AK292830">
    <property type="protein sequence ID" value="BAF85519.1"/>
    <property type="molecule type" value="mRNA"/>
</dbReference>
<dbReference type="EMBL" id="AL139216">
    <property type="status" value="NOT_ANNOTATED_CDS"/>
    <property type="molecule type" value="Genomic_DNA"/>
</dbReference>
<dbReference type="EMBL" id="AL354978">
    <property type="status" value="NOT_ANNOTATED_CDS"/>
    <property type="molecule type" value="Genomic_DNA"/>
</dbReference>
<dbReference type="EMBL" id="AL592161">
    <property type="status" value="NOT_ANNOTATED_CDS"/>
    <property type="molecule type" value="Genomic_DNA"/>
</dbReference>
<dbReference type="EMBL" id="BC032406">
    <property type="protein sequence ID" value="AAH32406.2"/>
    <property type="molecule type" value="mRNA"/>
</dbReference>
<dbReference type="EMBL" id="AL133617">
    <property type="protein sequence ID" value="CAB63744.3"/>
    <property type="molecule type" value="mRNA"/>
</dbReference>
<dbReference type="CCDS" id="CCDS44157.1">
    <molecule id="Q5VTH9-2"/>
</dbReference>
<dbReference type="CCDS" id="CCDS635.1">
    <molecule id="Q5VTH9-1"/>
</dbReference>
<dbReference type="PIR" id="T43473">
    <property type="entry name" value="T43473"/>
</dbReference>
<dbReference type="RefSeq" id="NP_079039.4">
    <molecule id="Q5VTH9-1"/>
    <property type="nucleotide sequence ID" value="NM_024763.4"/>
</dbReference>
<dbReference type="RefSeq" id="NP_996897.2">
    <molecule id="Q5VTH9-2"/>
    <property type="nucleotide sequence ID" value="NM_207014.3"/>
</dbReference>
<dbReference type="PDB" id="8J07">
    <property type="method" value="EM"/>
    <property type="resolution" value="4.10 A"/>
    <property type="chains" value="k2=1-848"/>
</dbReference>
<dbReference type="PDBsum" id="8J07"/>
<dbReference type="EMDB" id="EMD-35888"/>
<dbReference type="SMR" id="Q5VTH9"/>
<dbReference type="BioGRID" id="122914">
    <property type="interactions" value="3"/>
</dbReference>
<dbReference type="FunCoup" id="Q5VTH9">
    <property type="interactions" value="242"/>
</dbReference>
<dbReference type="IntAct" id="Q5VTH9">
    <property type="interactions" value="1"/>
</dbReference>
<dbReference type="STRING" id="9606.ENSP00000360065"/>
<dbReference type="GlyGen" id="Q5VTH9">
    <property type="glycosylation" value="1 site, 1 O-linked glycan (1 site)"/>
</dbReference>
<dbReference type="iPTMnet" id="Q5VTH9"/>
<dbReference type="PhosphoSitePlus" id="Q5VTH9"/>
<dbReference type="BioMuta" id="WDR78"/>
<dbReference type="DMDM" id="74756797"/>
<dbReference type="jPOST" id="Q5VTH9"/>
<dbReference type="MassIVE" id="Q5VTH9"/>
<dbReference type="PaxDb" id="9606-ENSP00000360065"/>
<dbReference type="PeptideAtlas" id="Q5VTH9"/>
<dbReference type="ProteomicsDB" id="43534"/>
<dbReference type="ProteomicsDB" id="65329">
    <molecule id="Q5VTH9-1"/>
</dbReference>
<dbReference type="ProteomicsDB" id="65330">
    <molecule id="Q5VTH9-2"/>
</dbReference>
<dbReference type="ProteomicsDB" id="65331">
    <molecule id="Q5VTH9-3"/>
</dbReference>
<dbReference type="Antibodypedia" id="51698">
    <property type="antibodies" value="17 antibodies from 8 providers"/>
</dbReference>
<dbReference type="DNASU" id="79819"/>
<dbReference type="Ensembl" id="ENST00000371023.7">
    <molecule id="Q5VTH9-2"/>
    <property type="protein sequence ID" value="ENSP00000360062.3"/>
    <property type="gene ID" value="ENSG00000152763.17"/>
</dbReference>
<dbReference type="Ensembl" id="ENST00000371026.8">
    <molecule id="Q5VTH9-1"/>
    <property type="protein sequence ID" value="ENSP00000360065.3"/>
    <property type="gene ID" value="ENSG00000152763.17"/>
</dbReference>
<dbReference type="GeneID" id="79819"/>
<dbReference type="KEGG" id="hsa:79819"/>
<dbReference type="MANE-Select" id="ENST00000371026.8">
    <property type="protein sequence ID" value="ENSP00000360065.3"/>
    <property type="RefSeq nucleotide sequence ID" value="NM_024763.5"/>
    <property type="RefSeq protein sequence ID" value="NP_079039.4"/>
</dbReference>
<dbReference type="UCSC" id="uc001dcx.5">
    <molecule id="Q5VTH9-1"/>
    <property type="organism name" value="human"/>
</dbReference>
<dbReference type="AGR" id="HGNC:26252"/>
<dbReference type="CTD" id="79819"/>
<dbReference type="DisGeNET" id="79819"/>
<dbReference type="GeneCards" id="DNAI4"/>
<dbReference type="HGNC" id="HGNC:26252">
    <property type="gene designation" value="DNAI4"/>
</dbReference>
<dbReference type="HPA" id="ENSG00000152763">
    <property type="expression patterns" value="Tissue enhanced (choroid plexus, fallopian tube, testis)"/>
</dbReference>
<dbReference type="MIM" id="619156">
    <property type="type" value="gene"/>
</dbReference>
<dbReference type="neXtProt" id="NX_Q5VTH9"/>
<dbReference type="OpenTargets" id="ENSG00000152763"/>
<dbReference type="VEuPathDB" id="HostDB:ENSG00000152763"/>
<dbReference type="eggNOG" id="KOG0263">
    <property type="taxonomic scope" value="Eukaryota"/>
</dbReference>
<dbReference type="GeneTree" id="ENSGT00940000156209"/>
<dbReference type="HOGENOM" id="CLU_015820_3_0_1"/>
<dbReference type="InParanoid" id="Q5VTH9"/>
<dbReference type="OMA" id="VFVWSIK"/>
<dbReference type="OrthoDB" id="10259804at2759"/>
<dbReference type="PAN-GO" id="Q5VTH9">
    <property type="GO annotations" value="4 GO annotations based on evolutionary models"/>
</dbReference>
<dbReference type="PhylomeDB" id="Q5VTH9"/>
<dbReference type="TreeFam" id="TF300553"/>
<dbReference type="PathwayCommons" id="Q5VTH9"/>
<dbReference type="SignaLink" id="Q5VTH9"/>
<dbReference type="BioGRID-ORCS" id="79819">
    <property type="hits" value="12 hits in 1142 CRISPR screens"/>
</dbReference>
<dbReference type="ChiTaRS" id="WDR78">
    <property type="organism name" value="human"/>
</dbReference>
<dbReference type="GenomeRNAi" id="79819"/>
<dbReference type="Pharos" id="Q5VTH9">
    <property type="development level" value="Tdark"/>
</dbReference>
<dbReference type="PRO" id="PR:Q5VTH9"/>
<dbReference type="Proteomes" id="UP000005640">
    <property type="component" value="Chromosome 1"/>
</dbReference>
<dbReference type="RNAct" id="Q5VTH9">
    <property type="molecule type" value="protein"/>
</dbReference>
<dbReference type="Bgee" id="ENSG00000152763">
    <property type="expression patterns" value="Expressed in bronchial epithelial cell and 125 other cell types or tissues"/>
</dbReference>
<dbReference type="ExpressionAtlas" id="Q5VTH9">
    <property type="expression patterns" value="baseline and differential"/>
</dbReference>
<dbReference type="GO" id="GO:0005858">
    <property type="term" value="C:axonemal dynein complex"/>
    <property type="evidence" value="ECO:0000250"/>
    <property type="project" value="UniProtKB"/>
</dbReference>
<dbReference type="GO" id="GO:0005930">
    <property type="term" value="C:axoneme"/>
    <property type="evidence" value="ECO:0000250"/>
    <property type="project" value="UniProtKB"/>
</dbReference>
<dbReference type="GO" id="GO:0120293">
    <property type="term" value="C:dynein axonemal particle"/>
    <property type="evidence" value="ECO:0000250"/>
    <property type="project" value="UniProtKB"/>
</dbReference>
<dbReference type="GO" id="GO:0031514">
    <property type="term" value="C:motile cilium"/>
    <property type="evidence" value="ECO:0000250"/>
    <property type="project" value="UniProtKB"/>
</dbReference>
<dbReference type="GO" id="GO:0045504">
    <property type="term" value="F:dynein heavy chain binding"/>
    <property type="evidence" value="ECO:0000318"/>
    <property type="project" value="GO_Central"/>
</dbReference>
<dbReference type="GO" id="GO:0045503">
    <property type="term" value="F:dynein light chain binding"/>
    <property type="evidence" value="ECO:0000318"/>
    <property type="project" value="GO_Central"/>
</dbReference>
<dbReference type="GO" id="GO:0070286">
    <property type="term" value="P:axonemal dynein complex assembly"/>
    <property type="evidence" value="ECO:0000250"/>
    <property type="project" value="UniProtKB"/>
</dbReference>
<dbReference type="GO" id="GO:0003341">
    <property type="term" value="P:cilium movement"/>
    <property type="evidence" value="ECO:0000250"/>
    <property type="project" value="UniProtKB"/>
</dbReference>
<dbReference type="GO" id="GO:0002244">
    <property type="term" value="P:hematopoietic progenitor cell differentiation"/>
    <property type="evidence" value="ECO:0007669"/>
    <property type="project" value="Ensembl"/>
</dbReference>
<dbReference type="FunFam" id="2.130.10.10:FF:000373">
    <property type="entry name" value="WD repeat domain 78"/>
    <property type="match status" value="1"/>
</dbReference>
<dbReference type="FunFam" id="2.130.10.10:FF:000379">
    <property type="entry name" value="WD repeat domain 78"/>
    <property type="match status" value="1"/>
</dbReference>
<dbReference type="Gene3D" id="2.130.10.10">
    <property type="entry name" value="YVTN repeat-like/Quinoprotein amine dehydrogenase"/>
    <property type="match status" value="2"/>
</dbReference>
<dbReference type="InterPro" id="IPR050687">
    <property type="entry name" value="Dynein_IC"/>
</dbReference>
<dbReference type="InterPro" id="IPR015943">
    <property type="entry name" value="WD40/YVTN_repeat-like_dom_sf"/>
</dbReference>
<dbReference type="InterPro" id="IPR036322">
    <property type="entry name" value="WD40_repeat_dom_sf"/>
</dbReference>
<dbReference type="InterPro" id="IPR001680">
    <property type="entry name" value="WD40_rpt"/>
</dbReference>
<dbReference type="PANTHER" id="PTHR12442:SF12">
    <property type="entry name" value="DYNEIN AXONEMAL INTERMEDIATE CHAIN 4"/>
    <property type="match status" value="1"/>
</dbReference>
<dbReference type="PANTHER" id="PTHR12442">
    <property type="entry name" value="DYNEIN INTERMEDIATE CHAIN"/>
    <property type="match status" value="1"/>
</dbReference>
<dbReference type="Pfam" id="PF00400">
    <property type="entry name" value="WD40"/>
    <property type="match status" value="2"/>
</dbReference>
<dbReference type="SMART" id="SM00320">
    <property type="entry name" value="WD40"/>
    <property type="match status" value="5"/>
</dbReference>
<dbReference type="SUPFAM" id="SSF50978">
    <property type="entry name" value="WD40 repeat-like"/>
    <property type="match status" value="1"/>
</dbReference>
<dbReference type="PROSITE" id="PS50082">
    <property type="entry name" value="WD_REPEATS_2"/>
    <property type="match status" value="2"/>
</dbReference>
<dbReference type="PROSITE" id="PS50294">
    <property type="entry name" value="WD_REPEATS_REGION"/>
    <property type="match status" value="1"/>
</dbReference>
<name>DNAI4_HUMAN</name>